<protein>
    <recommendedName>
        <fullName evidence="1">Ribosomal RNA large subunit methyltransferase I</fullName>
        <ecNumber evidence="1">2.1.1.191</ecNumber>
    </recommendedName>
    <alternativeName>
        <fullName evidence="1">23S rRNA m5C1962 methyltransferase</fullName>
    </alternativeName>
    <alternativeName>
        <fullName evidence="1">rRNA (cytosine-C(5)-)-methyltransferase RlmI</fullName>
    </alternativeName>
</protein>
<reference key="1">
    <citation type="submission" date="2006-08" db="EMBL/GenBank/DDBJ databases">
        <title>Complete sequence of chromosome 1 of Shewanella sp. MR-7.</title>
        <authorList>
            <person name="Copeland A."/>
            <person name="Lucas S."/>
            <person name="Lapidus A."/>
            <person name="Barry K."/>
            <person name="Detter J.C."/>
            <person name="Glavina del Rio T."/>
            <person name="Hammon N."/>
            <person name="Israni S."/>
            <person name="Dalin E."/>
            <person name="Tice H."/>
            <person name="Pitluck S."/>
            <person name="Kiss H."/>
            <person name="Brettin T."/>
            <person name="Bruce D."/>
            <person name="Han C."/>
            <person name="Tapia R."/>
            <person name="Gilna P."/>
            <person name="Schmutz J."/>
            <person name="Larimer F."/>
            <person name="Land M."/>
            <person name="Hauser L."/>
            <person name="Kyrpides N."/>
            <person name="Mikhailova N."/>
            <person name="Nealson K."/>
            <person name="Konstantinidis K."/>
            <person name="Klappenbach J."/>
            <person name="Tiedje J."/>
            <person name="Richardson P."/>
        </authorList>
    </citation>
    <scope>NUCLEOTIDE SEQUENCE [LARGE SCALE GENOMIC DNA]</scope>
    <source>
        <strain>MR-7</strain>
    </source>
</reference>
<evidence type="ECO:0000255" key="1">
    <source>
        <dbReference type="HAMAP-Rule" id="MF_01857"/>
    </source>
</evidence>
<sequence length="396" mass="44146">MAVRIKLKPGREKSLERRHPWVFSNGIHNVKGKLEPGDTVDVVAHDGHWLGRGAWSPESQIQVRIWTFDREEEIDREFFKRRILRAQAGRDDLIREQGLTGYRLIAAESDGLPGITIDKYANVLVCQLLSMGADVWRDTIVDVLAELYPDCAIYERSDVDSRKKEGLASTMGLLHGSLPEMPVIIEENGIKIAVDVTKGHKTGFYLDQRDNRAMAARFVKGKSVLNCFCYTGTFGLYAAKAGAASIENVDVSALALDTARLNMRVNGLNDDNVHYNEADVFKLLRQYRDEGKTFDVIVLDPPKFADNKSQLNGACRGYKDINMIALQLLNPGGVLLTFSCSGLMPADLFQKIVADAALDAKREIQFIERLSQASDHPIGSAFPEGFYLKGLVARVW</sequence>
<comment type="function">
    <text evidence="1">Specifically methylates the cytosine at position 1962 (m5C1962) of 23S rRNA.</text>
</comment>
<comment type="catalytic activity">
    <reaction evidence="1">
        <text>cytidine(1962) in 23S rRNA + S-adenosyl-L-methionine = 5-methylcytidine(1962) in 23S rRNA + S-adenosyl-L-homocysteine + H(+)</text>
        <dbReference type="Rhea" id="RHEA:42912"/>
        <dbReference type="Rhea" id="RHEA-COMP:10382"/>
        <dbReference type="Rhea" id="RHEA-COMP:10386"/>
        <dbReference type="ChEBI" id="CHEBI:15378"/>
        <dbReference type="ChEBI" id="CHEBI:57856"/>
        <dbReference type="ChEBI" id="CHEBI:59789"/>
        <dbReference type="ChEBI" id="CHEBI:74483"/>
        <dbReference type="ChEBI" id="CHEBI:82748"/>
        <dbReference type="EC" id="2.1.1.191"/>
    </reaction>
</comment>
<comment type="subcellular location">
    <subcellularLocation>
        <location evidence="1">Cytoplasm</location>
    </subcellularLocation>
</comment>
<comment type="similarity">
    <text evidence="1">Belongs to the methyltransferase superfamily. RlmI family.</text>
</comment>
<feature type="chain" id="PRO_0000366264" description="Ribosomal RNA large subunit methyltransferase I">
    <location>
        <begin position="1"/>
        <end position="396"/>
    </location>
</feature>
<feature type="domain" description="PUA" evidence="1">
    <location>
        <begin position="2"/>
        <end position="79"/>
    </location>
</feature>
<keyword id="KW-0963">Cytoplasm</keyword>
<keyword id="KW-0489">Methyltransferase</keyword>
<keyword id="KW-0694">RNA-binding</keyword>
<keyword id="KW-0698">rRNA processing</keyword>
<keyword id="KW-0949">S-adenosyl-L-methionine</keyword>
<keyword id="KW-0808">Transferase</keyword>
<gene>
    <name evidence="1" type="primary">rlmI</name>
    <name type="ordered locus">Shewmr7_1011</name>
</gene>
<dbReference type="EC" id="2.1.1.191" evidence="1"/>
<dbReference type="EMBL" id="CP000444">
    <property type="protein sequence ID" value="ABI42010.1"/>
    <property type="molecule type" value="Genomic_DNA"/>
</dbReference>
<dbReference type="SMR" id="Q0HXZ5"/>
<dbReference type="KEGG" id="shm:Shewmr7_1011"/>
<dbReference type="HOGENOM" id="CLU_014042_0_0_6"/>
<dbReference type="GO" id="GO:0005737">
    <property type="term" value="C:cytoplasm"/>
    <property type="evidence" value="ECO:0007669"/>
    <property type="project" value="UniProtKB-SubCell"/>
</dbReference>
<dbReference type="GO" id="GO:0003723">
    <property type="term" value="F:RNA binding"/>
    <property type="evidence" value="ECO:0007669"/>
    <property type="project" value="UniProtKB-KW"/>
</dbReference>
<dbReference type="GO" id="GO:0016434">
    <property type="term" value="F:rRNA (cytosine) methyltransferase activity"/>
    <property type="evidence" value="ECO:0007669"/>
    <property type="project" value="UniProtKB-UniRule"/>
</dbReference>
<dbReference type="CDD" id="cd02440">
    <property type="entry name" value="AdoMet_MTases"/>
    <property type="match status" value="1"/>
</dbReference>
<dbReference type="CDD" id="cd21153">
    <property type="entry name" value="PUA_RlmI"/>
    <property type="match status" value="1"/>
</dbReference>
<dbReference type="CDD" id="cd11572">
    <property type="entry name" value="RlmI_M_like"/>
    <property type="match status" value="1"/>
</dbReference>
<dbReference type="Gene3D" id="2.30.130.10">
    <property type="entry name" value="PUA domain"/>
    <property type="match status" value="1"/>
</dbReference>
<dbReference type="Gene3D" id="3.30.750.80">
    <property type="entry name" value="RNA methyltransferase domain (HRMD) like"/>
    <property type="match status" value="1"/>
</dbReference>
<dbReference type="Gene3D" id="3.40.50.150">
    <property type="entry name" value="Vaccinia Virus protein VP39"/>
    <property type="match status" value="1"/>
</dbReference>
<dbReference type="HAMAP" id="MF_01857">
    <property type="entry name" value="23SrRNA_methyltr_I"/>
    <property type="match status" value="1"/>
</dbReference>
<dbReference type="InterPro" id="IPR002478">
    <property type="entry name" value="PUA"/>
</dbReference>
<dbReference type="InterPro" id="IPR015947">
    <property type="entry name" value="PUA-like_sf"/>
</dbReference>
<dbReference type="InterPro" id="IPR036974">
    <property type="entry name" value="PUA_sf"/>
</dbReference>
<dbReference type="InterPro" id="IPR023542">
    <property type="entry name" value="RLMI"/>
</dbReference>
<dbReference type="InterPro" id="IPR041532">
    <property type="entry name" value="RlmI-like_PUA"/>
</dbReference>
<dbReference type="InterPro" id="IPR019614">
    <property type="entry name" value="SAM-dep_methyl-trfase"/>
</dbReference>
<dbReference type="InterPro" id="IPR029063">
    <property type="entry name" value="SAM-dependent_MTases_sf"/>
</dbReference>
<dbReference type="PANTHER" id="PTHR42873">
    <property type="entry name" value="RIBOSOMAL RNA LARGE SUBUNIT METHYLTRANSFERASE"/>
    <property type="match status" value="1"/>
</dbReference>
<dbReference type="PANTHER" id="PTHR42873:SF1">
    <property type="entry name" value="S-ADENOSYLMETHIONINE-DEPENDENT METHYLTRANSFERASE DOMAIN-CONTAINING PROTEIN"/>
    <property type="match status" value="1"/>
</dbReference>
<dbReference type="Pfam" id="PF10672">
    <property type="entry name" value="Methyltrans_SAM"/>
    <property type="match status" value="1"/>
</dbReference>
<dbReference type="Pfam" id="PF17785">
    <property type="entry name" value="PUA_3"/>
    <property type="match status" value="1"/>
</dbReference>
<dbReference type="SMART" id="SM00359">
    <property type="entry name" value="PUA"/>
    <property type="match status" value="1"/>
</dbReference>
<dbReference type="SUPFAM" id="SSF88697">
    <property type="entry name" value="PUA domain-like"/>
    <property type="match status" value="1"/>
</dbReference>
<dbReference type="SUPFAM" id="SSF53335">
    <property type="entry name" value="S-adenosyl-L-methionine-dependent methyltransferases"/>
    <property type="match status" value="1"/>
</dbReference>
<dbReference type="PROSITE" id="PS50890">
    <property type="entry name" value="PUA"/>
    <property type="match status" value="1"/>
</dbReference>
<accession>Q0HXZ5</accession>
<proteinExistence type="inferred from homology"/>
<organism>
    <name type="scientific">Shewanella sp. (strain MR-7)</name>
    <dbReference type="NCBI Taxonomy" id="60481"/>
    <lineage>
        <taxon>Bacteria</taxon>
        <taxon>Pseudomonadati</taxon>
        <taxon>Pseudomonadota</taxon>
        <taxon>Gammaproteobacteria</taxon>
        <taxon>Alteromonadales</taxon>
        <taxon>Shewanellaceae</taxon>
        <taxon>Shewanella</taxon>
    </lineage>
</organism>
<name>RLMI_SHESR</name>